<reference key="1">
    <citation type="journal article" date="2000" name="Nature">
        <title>Sequence and analysis of chromosome 1 of the plant Arabidopsis thaliana.</title>
        <authorList>
            <person name="Theologis A."/>
            <person name="Ecker J.R."/>
            <person name="Palm C.J."/>
            <person name="Federspiel N.A."/>
            <person name="Kaul S."/>
            <person name="White O."/>
            <person name="Alonso J."/>
            <person name="Altafi H."/>
            <person name="Araujo R."/>
            <person name="Bowman C.L."/>
            <person name="Brooks S.Y."/>
            <person name="Buehler E."/>
            <person name="Chan A."/>
            <person name="Chao Q."/>
            <person name="Chen H."/>
            <person name="Cheuk R.F."/>
            <person name="Chin C.W."/>
            <person name="Chung M.K."/>
            <person name="Conn L."/>
            <person name="Conway A.B."/>
            <person name="Conway A.R."/>
            <person name="Creasy T.H."/>
            <person name="Dewar K."/>
            <person name="Dunn P."/>
            <person name="Etgu P."/>
            <person name="Feldblyum T.V."/>
            <person name="Feng J.-D."/>
            <person name="Fong B."/>
            <person name="Fujii C.Y."/>
            <person name="Gill J.E."/>
            <person name="Goldsmith A.D."/>
            <person name="Haas B."/>
            <person name="Hansen N.F."/>
            <person name="Hughes B."/>
            <person name="Huizar L."/>
            <person name="Hunter J.L."/>
            <person name="Jenkins J."/>
            <person name="Johnson-Hopson C."/>
            <person name="Khan S."/>
            <person name="Khaykin E."/>
            <person name="Kim C.J."/>
            <person name="Koo H.L."/>
            <person name="Kremenetskaia I."/>
            <person name="Kurtz D.B."/>
            <person name="Kwan A."/>
            <person name="Lam B."/>
            <person name="Langin-Hooper S."/>
            <person name="Lee A."/>
            <person name="Lee J.M."/>
            <person name="Lenz C.A."/>
            <person name="Li J.H."/>
            <person name="Li Y.-P."/>
            <person name="Lin X."/>
            <person name="Liu S.X."/>
            <person name="Liu Z.A."/>
            <person name="Luros J.S."/>
            <person name="Maiti R."/>
            <person name="Marziali A."/>
            <person name="Militscher J."/>
            <person name="Miranda M."/>
            <person name="Nguyen M."/>
            <person name="Nierman W.C."/>
            <person name="Osborne B.I."/>
            <person name="Pai G."/>
            <person name="Peterson J."/>
            <person name="Pham P.K."/>
            <person name="Rizzo M."/>
            <person name="Rooney T."/>
            <person name="Rowley D."/>
            <person name="Sakano H."/>
            <person name="Salzberg S.L."/>
            <person name="Schwartz J.R."/>
            <person name="Shinn P."/>
            <person name="Southwick A.M."/>
            <person name="Sun H."/>
            <person name="Tallon L.J."/>
            <person name="Tambunga G."/>
            <person name="Toriumi M.J."/>
            <person name="Town C.D."/>
            <person name="Utterback T."/>
            <person name="Van Aken S."/>
            <person name="Vaysberg M."/>
            <person name="Vysotskaia V.S."/>
            <person name="Walker M."/>
            <person name="Wu D."/>
            <person name="Yu G."/>
            <person name="Fraser C.M."/>
            <person name="Venter J.C."/>
            <person name="Davis R.W."/>
        </authorList>
    </citation>
    <scope>NUCLEOTIDE SEQUENCE [LARGE SCALE GENOMIC DNA]</scope>
    <source>
        <strain>cv. Columbia</strain>
    </source>
</reference>
<reference key="2">
    <citation type="journal article" date="2017" name="Plant J.">
        <title>Araport11: a complete reannotation of the Arabidopsis thaliana reference genome.</title>
        <authorList>
            <person name="Cheng C.Y."/>
            <person name="Krishnakumar V."/>
            <person name="Chan A.P."/>
            <person name="Thibaud-Nissen F."/>
            <person name="Schobel S."/>
            <person name="Town C.D."/>
        </authorList>
    </citation>
    <scope>GENOME REANNOTATION</scope>
    <source>
        <strain>cv. Columbia</strain>
    </source>
</reference>
<reference key="3">
    <citation type="journal article" date="2003" name="Science">
        <title>Empirical analysis of transcriptional activity in the Arabidopsis genome.</title>
        <authorList>
            <person name="Yamada K."/>
            <person name="Lim J."/>
            <person name="Dale J.M."/>
            <person name="Chen H."/>
            <person name="Shinn P."/>
            <person name="Palm C.J."/>
            <person name="Southwick A.M."/>
            <person name="Wu H.C."/>
            <person name="Kim C.J."/>
            <person name="Nguyen M."/>
            <person name="Pham P.K."/>
            <person name="Cheuk R.F."/>
            <person name="Karlin-Newmann G."/>
            <person name="Liu S.X."/>
            <person name="Lam B."/>
            <person name="Sakano H."/>
            <person name="Wu T."/>
            <person name="Yu G."/>
            <person name="Miranda M."/>
            <person name="Quach H.L."/>
            <person name="Tripp M."/>
            <person name="Chang C.H."/>
            <person name="Lee J.M."/>
            <person name="Toriumi M.J."/>
            <person name="Chan M.M."/>
            <person name="Tang C.C."/>
            <person name="Onodera C.S."/>
            <person name="Deng J.M."/>
            <person name="Akiyama K."/>
            <person name="Ansari Y."/>
            <person name="Arakawa T."/>
            <person name="Banh J."/>
            <person name="Banno F."/>
            <person name="Bowser L."/>
            <person name="Brooks S.Y."/>
            <person name="Carninci P."/>
            <person name="Chao Q."/>
            <person name="Choy N."/>
            <person name="Enju A."/>
            <person name="Goldsmith A.D."/>
            <person name="Gurjal M."/>
            <person name="Hansen N.F."/>
            <person name="Hayashizaki Y."/>
            <person name="Johnson-Hopson C."/>
            <person name="Hsuan V.W."/>
            <person name="Iida K."/>
            <person name="Karnes M."/>
            <person name="Khan S."/>
            <person name="Koesema E."/>
            <person name="Ishida J."/>
            <person name="Jiang P.X."/>
            <person name="Jones T."/>
            <person name="Kawai J."/>
            <person name="Kamiya A."/>
            <person name="Meyers C."/>
            <person name="Nakajima M."/>
            <person name="Narusaka M."/>
            <person name="Seki M."/>
            <person name="Sakurai T."/>
            <person name="Satou M."/>
            <person name="Tamse R."/>
            <person name="Vaysberg M."/>
            <person name="Wallender E.K."/>
            <person name="Wong C."/>
            <person name="Yamamura Y."/>
            <person name="Yuan S."/>
            <person name="Shinozaki K."/>
            <person name="Davis R.W."/>
            <person name="Theologis A."/>
            <person name="Ecker J.R."/>
        </authorList>
    </citation>
    <scope>NUCLEOTIDE SEQUENCE [LARGE SCALE MRNA]</scope>
    <source>
        <strain>cv. Columbia</strain>
    </source>
</reference>
<reference key="4">
    <citation type="journal article" date="2002" name="Trends Plant Sci.">
        <title>bZIP transcription factors in Arabidopsis.</title>
        <authorList>
            <person name="Jakoby M."/>
            <person name="Weisshaar B."/>
            <person name="Droege-Laser W."/>
            <person name="Vicente-Carbajosa J."/>
            <person name="Tiedemann J."/>
            <person name="Kroj T."/>
            <person name="Parcy F."/>
        </authorList>
    </citation>
    <scope>GENE FAMILY</scope>
    <scope>NOMENCLATURE</scope>
</reference>
<reference key="5">
    <citation type="journal article" date="2007" name="Mol. Cell. Proteomics">
        <title>Multidimensional protein identification technology (MudPIT) analysis of ubiquitinated proteins in plants.</title>
        <authorList>
            <person name="Maor R."/>
            <person name="Jones A."/>
            <person name="Nuehse T.S."/>
            <person name="Studholme D.J."/>
            <person name="Peck S.C."/>
            <person name="Shirasu K."/>
        </authorList>
    </citation>
    <scope>UBIQUITINATION [LARGE SCALE ANALYSIS] AT LYS-154</scope>
    <scope>IDENTIFICATION BY MASS SPECTROMETRY [LARGE SCALE ANALYSIS]</scope>
    <source>
        <strain>cv. Landsberg erecta</strain>
    </source>
</reference>
<reference key="6">
    <citation type="journal article" date="2008" name="BMB Rep.">
        <title>AtbZIP16 and AtbZIP68, two new members of GBFs, can interact with other G group bZIPs in Arabidopsis thaliana.</title>
        <authorList>
            <person name="Shen H."/>
            <person name="Cao K."/>
            <person name="Wang X."/>
        </authorList>
    </citation>
    <scope>FUNCTION</scope>
    <scope>SUBUNIT</scope>
    <scope>INTERACTION WITH BZIP16; GBF1/BZIP41; GBF2/BZIP54 AND GBF3/BZIP55</scope>
    <scope>SUBCELLULAR LOCATION</scope>
</reference>
<reference key="7">
    <citation type="journal article" date="2009" name="Plant Physiol.">
        <title>Large-scale Arabidopsis phosphoproteome profiling reveals novel chloroplast kinase substrates and phosphorylation networks.</title>
        <authorList>
            <person name="Reiland S."/>
            <person name="Messerli G."/>
            <person name="Baerenfaller K."/>
            <person name="Gerrits B."/>
            <person name="Endler A."/>
            <person name="Grossmann J."/>
            <person name="Gruissem W."/>
            <person name="Baginsky S."/>
        </authorList>
    </citation>
    <scope>IDENTIFICATION BY MASS SPECTROMETRY [LARGE SCALE ANALYSIS]</scope>
</reference>
<reference key="8">
    <citation type="journal article" date="2012" name="J. Biol. Chem.">
        <title>Redox-mediated mechanisms regulate DNA binding activity of the G-group of basic region leucine zipper (bZIP) transcription factors in Arabidopsis.</title>
        <authorList>
            <person name="Shaikhali J."/>
            <person name="Noren L."/>
            <person name="de Dios Barajas-Lopez J."/>
            <person name="Srivastava V."/>
            <person name="Koenig J."/>
            <person name="Sauer U.H."/>
            <person name="Wingsle G."/>
            <person name="Dietz K.J."/>
            <person name="Strand A."/>
        </authorList>
    </citation>
    <scope>FUNCTION</scope>
    <scope>INTERACTION WITH BZIP16</scope>
    <scope>DISULFIDE BOND</scope>
    <scope>MUTAGENESIS OF CYS-182 AND CYS-320</scope>
</reference>
<reference key="9">
    <citation type="journal article" date="2015" name="Protoplasma">
        <title>GIP1 protein is a novel cofactor that regulates DNA-binding affinity of redox-regulated members of bZIP transcription factors involved in the early stages of Arabidopsis development.</title>
        <authorList>
            <person name="Shaikhali J."/>
        </authorList>
    </citation>
    <scope>INTERACTION WITH GIP1</scope>
</reference>
<keyword id="KW-0010">Activator</keyword>
<keyword id="KW-1015">Disulfide bond</keyword>
<keyword id="KW-0238">DNA-binding</keyword>
<keyword id="KW-1017">Isopeptide bond</keyword>
<keyword id="KW-0539">Nucleus</keyword>
<keyword id="KW-1185">Reference proteome</keyword>
<keyword id="KW-0804">Transcription</keyword>
<keyword id="KW-0805">Transcription regulation</keyword>
<keyword id="KW-0832">Ubl conjugation</keyword>
<comment type="function">
    <text evidence="3 4 8">Transcriptional activator that binds to the G-box motif (5'-CACGTG-3') and other cis-acting elements with 5'-ACGT-3' core, such as Hex, C-box and as-1 motifs. Possesses high binding affinity to G-box, much lower affinity to Hex and C-box, and little affinity to as-1 element (PubMed:18315949). G-box and G-box-like motifs are cis-acting elements defined in promoters of certain plant genes which are regulated by such diverse stimuli as light-induction or hormone control (Probable). Binds to the G-box motif 5'-CACGTG-3' of LHCB2.4 (At3g27690) promoter. May act as transcriptional activator in light-regulated expression of LHCB2.4. Probably binds DNA as monomer. DNA-binding activity is redox-dependent (PubMed:22718771).</text>
</comment>
<comment type="subunit">
    <text evidence="3 4 5">Monomer, homodimer and heterodimers with GBF1/BZIP41, GBF2/BZIP54 and GBF3/BZIP55 (PubMed:18315949). Heterodimers with BZIP16 (PubMed:18315949, PubMed:22718771). Interacts with GIP1 (PubMed:25387999).</text>
</comment>
<comment type="subcellular location">
    <subcellularLocation>
        <location evidence="3">Nucleus</location>
    </subcellularLocation>
</comment>
<comment type="similarity">
    <text evidence="7">Belongs to the bZIP family.</text>
</comment>
<comment type="sequence caution" evidence="7">
    <conflict type="erroneous gene model prediction">
        <sequence resource="EMBL-CDS" id="AAG23442"/>
    </conflict>
</comment>
<protein>
    <recommendedName>
        <fullName evidence="7">bZIP transcription factor 68</fullName>
        <shortName evidence="6">AtbZIP68</shortName>
    </recommendedName>
</protein>
<dbReference type="EMBL" id="AC084165">
    <property type="protein sequence ID" value="AAG23442.1"/>
    <property type="status" value="ALT_SEQ"/>
    <property type="molecule type" value="Genomic_DNA"/>
</dbReference>
<dbReference type="EMBL" id="CP002684">
    <property type="protein sequence ID" value="AEE31441.1"/>
    <property type="molecule type" value="Genomic_DNA"/>
</dbReference>
<dbReference type="EMBL" id="BT004147">
    <property type="protein sequence ID" value="AAO42168.1"/>
    <property type="molecule type" value="mRNA"/>
</dbReference>
<dbReference type="PIR" id="H86445">
    <property type="entry name" value="H86445"/>
</dbReference>
<dbReference type="RefSeq" id="NP_174494.2">
    <property type="nucleotide sequence ID" value="NM_102948.4"/>
</dbReference>
<dbReference type="SMR" id="Q84LG2"/>
<dbReference type="FunCoup" id="Q84LG2">
    <property type="interactions" value="719"/>
</dbReference>
<dbReference type="IntAct" id="Q84LG2">
    <property type="interactions" value="5"/>
</dbReference>
<dbReference type="STRING" id="3702.Q84LG2"/>
<dbReference type="GlyGen" id="Q84LG2">
    <property type="glycosylation" value="1 site"/>
</dbReference>
<dbReference type="iPTMnet" id="Q84LG2"/>
<dbReference type="PaxDb" id="3702-AT1G32150.1"/>
<dbReference type="ProteomicsDB" id="240446"/>
<dbReference type="EnsemblPlants" id="AT1G32150.1">
    <property type="protein sequence ID" value="AT1G32150.1"/>
    <property type="gene ID" value="AT1G32150"/>
</dbReference>
<dbReference type="GeneID" id="840107"/>
<dbReference type="Gramene" id="AT1G32150.1">
    <property type="protein sequence ID" value="AT1G32150.1"/>
    <property type="gene ID" value="AT1G32150"/>
</dbReference>
<dbReference type="KEGG" id="ath:AT1G32150"/>
<dbReference type="Araport" id="AT1G32150"/>
<dbReference type="TAIR" id="AT1G32150">
    <property type="gene designation" value="BZIP68"/>
</dbReference>
<dbReference type="eggNOG" id="ENOG502QUJX">
    <property type="taxonomic scope" value="Eukaryota"/>
</dbReference>
<dbReference type="HOGENOM" id="CLU_036349_0_0_1"/>
<dbReference type="InParanoid" id="Q84LG2"/>
<dbReference type="OMA" id="MAIMPMS"/>
<dbReference type="PhylomeDB" id="Q84LG2"/>
<dbReference type="PRO" id="PR:Q84LG2"/>
<dbReference type="Proteomes" id="UP000006548">
    <property type="component" value="Chromosome 1"/>
</dbReference>
<dbReference type="ExpressionAtlas" id="Q84LG2">
    <property type="expression patterns" value="baseline and differential"/>
</dbReference>
<dbReference type="GO" id="GO:0005634">
    <property type="term" value="C:nucleus"/>
    <property type="evidence" value="ECO:0000314"/>
    <property type="project" value="TAIR"/>
</dbReference>
<dbReference type="GO" id="GO:0003700">
    <property type="term" value="F:DNA-binding transcription factor activity"/>
    <property type="evidence" value="ECO:0000250"/>
    <property type="project" value="TAIR"/>
</dbReference>
<dbReference type="GO" id="GO:0042802">
    <property type="term" value="F:identical protein binding"/>
    <property type="evidence" value="ECO:0000353"/>
    <property type="project" value="UniProtKB"/>
</dbReference>
<dbReference type="GO" id="GO:0043565">
    <property type="term" value="F:sequence-specific DNA binding"/>
    <property type="evidence" value="ECO:0000314"/>
    <property type="project" value="TAIR"/>
</dbReference>
<dbReference type="GO" id="GO:0000976">
    <property type="term" value="F:transcription cis-regulatory region binding"/>
    <property type="evidence" value="ECO:0000353"/>
    <property type="project" value="TAIR"/>
</dbReference>
<dbReference type="CDD" id="cd14702">
    <property type="entry name" value="bZIP_plant_GBF1"/>
    <property type="match status" value="1"/>
</dbReference>
<dbReference type="Gene3D" id="1.20.5.170">
    <property type="match status" value="1"/>
</dbReference>
<dbReference type="InterPro" id="IPR004827">
    <property type="entry name" value="bZIP"/>
</dbReference>
<dbReference type="InterPro" id="IPR045314">
    <property type="entry name" value="bZIP_plant_GBF1"/>
</dbReference>
<dbReference type="InterPro" id="IPR046347">
    <property type="entry name" value="bZIP_sf"/>
</dbReference>
<dbReference type="InterPro" id="IPR044827">
    <property type="entry name" value="GBF-like"/>
</dbReference>
<dbReference type="InterPro" id="IPR012900">
    <property type="entry name" value="MFMR"/>
</dbReference>
<dbReference type="PANTHER" id="PTHR45967:SF2">
    <property type="entry name" value="BZIP TRANSCRIPTION FACTOR 68"/>
    <property type="match status" value="1"/>
</dbReference>
<dbReference type="PANTHER" id="PTHR45967">
    <property type="entry name" value="G-BOX-BINDING FACTOR 3-RELATED"/>
    <property type="match status" value="1"/>
</dbReference>
<dbReference type="Pfam" id="PF00170">
    <property type="entry name" value="bZIP_1"/>
    <property type="match status" value="1"/>
</dbReference>
<dbReference type="Pfam" id="PF07777">
    <property type="entry name" value="MFMR"/>
    <property type="match status" value="1"/>
</dbReference>
<dbReference type="Pfam" id="PF16596">
    <property type="entry name" value="MFMR_assoc"/>
    <property type="match status" value="1"/>
</dbReference>
<dbReference type="SMART" id="SM00338">
    <property type="entry name" value="BRLZ"/>
    <property type="match status" value="1"/>
</dbReference>
<dbReference type="SUPFAM" id="SSF57959">
    <property type="entry name" value="Leucine zipper domain"/>
    <property type="match status" value="1"/>
</dbReference>
<dbReference type="PROSITE" id="PS50217">
    <property type="entry name" value="BZIP"/>
    <property type="match status" value="1"/>
</dbReference>
<dbReference type="PROSITE" id="PS00036">
    <property type="entry name" value="BZIP_BASIC"/>
    <property type="match status" value="1"/>
</dbReference>
<organism>
    <name type="scientific">Arabidopsis thaliana</name>
    <name type="common">Mouse-ear cress</name>
    <dbReference type="NCBI Taxonomy" id="3702"/>
    <lineage>
        <taxon>Eukaryota</taxon>
        <taxon>Viridiplantae</taxon>
        <taxon>Streptophyta</taxon>
        <taxon>Embryophyta</taxon>
        <taxon>Tracheophyta</taxon>
        <taxon>Spermatophyta</taxon>
        <taxon>Magnoliopsida</taxon>
        <taxon>eudicotyledons</taxon>
        <taxon>Gunneridae</taxon>
        <taxon>Pentapetalae</taxon>
        <taxon>rosids</taxon>
        <taxon>malvids</taxon>
        <taxon>Brassicales</taxon>
        <taxon>Brassicaceae</taxon>
        <taxon>Camelineae</taxon>
        <taxon>Arabidopsis</taxon>
    </lineage>
</organism>
<evidence type="ECO:0000255" key="1">
    <source>
        <dbReference type="PROSITE-ProRule" id="PRU00978"/>
    </source>
</evidence>
<evidence type="ECO:0000256" key="2">
    <source>
        <dbReference type="SAM" id="MobiDB-lite"/>
    </source>
</evidence>
<evidence type="ECO:0000269" key="3">
    <source>
    </source>
</evidence>
<evidence type="ECO:0000269" key="4">
    <source>
    </source>
</evidence>
<evidence type="ECO:0000269" key="5">
    <source>
    </source>
</evidence>
<evidence type="ECO:0000303" key="6">
    <source>
    </source>
</evidence>
<evidence type="ECO:0000305" key="7"/>
<evidence type="ECO:0000305" key="8">
    <source>
    </source>
</evidence>
<evidence type="ECO:0000305" key="9">
    <source>
    </source>
</evidence>
<evidence type="ECO:0000312" key="10">
    <source>
        <dbReference type="Araport" id="AT1G32150"/>
    </source>
</evidence>
<evidence type="ECO:0000312" key="11">
    <source>
        <dbReference type="EMBL" id="AAG23442.1"/>
    </source>
</evidence>
<evidence type="ECO:0007744" key="12">
    <source>
    </source>
</evidence>
<sequence>MGSSEMEKSGKEKEPKTTPPSTSSSAPATVVSQEPSSAVSAGVAVTQDWSGFQAYSPMPPHGYVASSPQPHPYMWGVQHMMPPYGTPPHPYVTMYPPGGMYAHPSLPPGSYPYSPYAMPSPNGMAEASGNTGSVIEGDGKPSDGKEKLPIKRSKGSLGSLNMIIGKNNEAGKNSGASANGACSKSAESGSDGSSDGSDANSQNDSGSRHNGKDGETASESGGSAHGPPRNGSNLPVNQTVAIMPVSATGVPGPPTNLNIGMDYWSGHGNVSGAVPGVVVDGSQSQPWLQVSDEREIKRQRRKQSNRESARRSRLRKQAECDELAQRAEVLNGENSSLRAEINKLKSQYEELLAENSSLKNKFSSAPSLEGGDLDKNEQEPQRSTRQDVA</sequence>
<name>BZP68_ARATH</name>
<gene>
    <name evidence="6" type="primary">BZIP68</name>
    <name evidence="10" type="ordered locus">At1g32150</name>
    <name evidence="11" type="ORF">F3C3.7</name>
</gene>
<accession>Q84LG2</accession>
<accession>Q9FVR0</accession>
<proteinExistence type="evidence at protein level"/>
<feature type="chain" id="PRO_0000435634" description="bZIP transcription factor 68">
    <location>
        <begin position="1"/>
        <end position="389"/>
    </location>
</feature>
<feature type="domain" description="bZIP" evidence="1">
    <location>
        <begin position="295"/>
        <end position="358"/>
    </location>
</feature>
<feature type="region of interest" description="Disordered" evidence="2">
    <location>
        <begin position="1"/>
        <end position="42"/>
    </location>
</feature>
<feature type="region of interest" description="Disordered" evidence="2">
    <location>
        <begin position="124"/>
        <end position="154"/>
    </location>
</feature>
<feature type="region of interest" description="Disordered" evidence="2">
    <location>
        <begin position="170"/>
        <end position="236"/>
    </location>
</feature>
<feature type="region of interest" description="Disordered" evidence="2">
    <location>
        <begin position="285"/>
        <end position="318"/>
    </location>
</feature>
<feature type="region of interest" description="Basic motif" evidence="1">
    <location>
        <begin position="297"/>
        <end position="316"/>
    </location>
</feature>
<feature type="region of interest" description="Leucine-zipper" evidence="1">
    <location>
        <begin position="323"/>
        <end position="358"/>
    </location>
</feature>
<feature type="region of interest" description="Disordered" evidence="2">
    <location>
        <begin position="356"/>
        <end position="389"/>
    </location>
</feature>
<feature type="compositionally biased region" description="Basic and acidic residues" evidence="2">
    <location>
        <begin position="1"/>
        <end position="16"/>
    </location>
</feature>
<feature type="compositionally biased region" description="Low complexity" evidence="2">
    <location>
        <begin position="19"/>
        <end position="32"/>
    </location>
</feature>
<feature type="compositionally biased region" description="Basic and acidic residues" evidence="2">
    <location>
        <begin position="137"/>
        <end position="149"/>
    </location>
</feature>
<feature type="compositionally biased region" description="Low complexity" evidence="2">
    <location>
        <begin position="170"/>
        <end position="205"/>
    </location>
</feature>
<feature type="compositionally biased region" description="Basic and acidic residues" evidence="2">
    <location>
        <begin position="206"/>
        <end position="215"/>
    </location>
</feature>
<feature type="compositionally biased region" description="Basic and acidic residues" evidence="2">
    <location>
        <begin position="304"/>
        <end position="318"/>
    </location>
</feature>
<feature type="compositionally biased region" description="Polar residues" evidence="2">
    <location>
        <begin position="356"/>
        <end position="366"/>
    </location>
</feature>
<feature type="compositionally biased region" description="Basic and acidic residues" evidence="2">
    <location>
        <begin position="372"/>
        <end position="389"/>
    </location>
</feature>
<feature type="disulfide bond" description="Interchain" evidence="9">
    <location>
        <position position="320"/>
    </location>
</feature>
<feature type="cross-link" description="Glycyl lysine isopeptide (Lys-Gly) (interchain with G-Cter in ubiquitin)" evidence="12">
    <location>
        <position position="154"/>
    </location>
</feature>
<feature type="mutagenesis site" description="Slightly increases DNA binding activity." evidence="4">
    <original>C</original>
    <variation>L</variation>
    <location>
        <position position="182"/>
    </location>
</feature>
<feature type="mutagenesis site" description="Significantly increases DNA binding activity." evidence="4">
    <original>C</original>
    <variation>L</variation>
    <location>
        <position position="320"/>
    </location>
</feature>